<protein>
    <recommendedName>
        <fullName>DASH complex subunit DAD1</fullName>
    </recommendedName>
    <alternativeName>
        <fullName>DUO1 and DAM1-interacting protein 1</fullName>
    </alternativeName>
    <alternativeName>
        <fullName>Outer kinetochore protein DAD1</fullName>
    </alternativeName>
</protein>
<organism>
    <name type="scientific">Saccharomyces cerevisiae (strain ATCC 204508 / S288c)</name>
    <name type="common">Baker's yeast</name>
    <dbReference type="NCBI Taxonomy" id="559292"/>
    <lineage>
        <taxon>Eukaryota</taxon>
        <taxon>Fungi</taxon>
        <taxon>Dikarya</taxon>
        <taxon>Ascomycota</taxon>
        <taxon>Saccharomycotina</taxon>
        <taxon>Saccharomycetes</taxon>
        <taxon>Saccharomycetales</taxon>
        <taxon>Saccharomycetaceae</taxon>
        <taxon>Saccharomyces</taxon>
    </lineage>
</organism>
<proteinExistence type="evidence at protein level"/>
<reference key="1">
    <citation type="journal article" date="1997" name="Nature">
        <title>The nucleotide sequence of Saccharomyces cerevisiae chromosome IV.</title>
        <authorList>
            <person name="Jacq C."/>
            <person name="Alt-Moerbe J."/>
            <person name="Andre B."/>
            <person name="Arnold W."/>
            <person name="Bahr A."/>
            <person name="Ballesta J.P.G."/>
            <person name="Bargues M."/>
            <person name="Baron L."/>
            <person name="Becker A."/>
            <person name="Biteau N."/>
            <person name="Bloecker H."/>
            <person name="Blugeon C."/>
            <person name="Boskovic J."/>
            <person name="Brandt P."/>
            <person name="Brueckner M."/>
            <person name="Buitrago M.J."/>
            <person name="Coster F."/>
            <person name="Delaveau T."/>
            <person name="del Rey F."/>
            <person name="Dujon B."/>
            <person name="Eide L.G."/>
            <person name="Garcia-Cantalejo J.M."/>
            <person name="Goffeau A."/>
            <person name="Gomez-Peris A."/>
            <person name="Granotier C."/>
            <person name="Hanemann V."/>
            <person name="Hankeln T."/>
            <person name="Hoheisel J.D."/>
            <person name="Jaeger W."/>
            <person name="Jimenez A."/>
            <person name="Jonniaux J.-L."/>
            <person name="Kraemer C."/>
            <person name="Kuester H."/>
            <person name="Laamanen P."/>
            <person name="Legros Y."/>
            <person name="Louis E.J."/>
            <person name="Moeller-Rieker S."/>
            <person name="Monnet A."/>
            <person name="Moro M."/>
            <person name="Mueller-Auer S."/>
            <person name="Nussbaumer B."/>
            <person name="Paricio N."/>
            <person name="Paulin L."/>
            <person name="Perea J."/>
            <person name="Perez-Alonso M."/>
            <person name="Perez-Ortin J.E."/>
            <person name="Pohl T.M."/>
            <person name="Prydz H."/>
            <person name="Purnelle B."/>
            <person name="Rasmussen S.W."/>
            <person name="Remacha M.A."/>
            <person name="Revuelta J.L."/>
            <person name="Rieger M."/>
            <person name="Salom D."/>
            <person name="Saluz H.P."/>
            <person name="Saiz J.E."/>
            <person name="Saren A.-M."/>
            <person name="Schaefer M."/>
            <person name="Scharfe M."/>
            <person name="Schmidt E.R."/>
            <person name="Schneider C."/>
            <person name="Scholler P."/>
            <person name="Schwarz S."/>
            <person name="Soler-Mira A."/>
            <person name="Urrestarazu L.A."/>
            <person name="Verhasselt P."/>
            <person name="Vissers S."/>
            <person name="Voet M."/>
            <person name="Volckaert G."/>
            <person name="Wagner G."/>
            <person name="Wambutt R."/>
            <person name="Wedler E."/>
            <person name="Wedler H."/>
            <person name="Woelfl S."/>
            <person name="Harris D.E."/>
            <person name="Bowman S."/>
            <person name="Brown D."/>
            <person name="Churcher C.M."/>
            <person name="Connor R."/>
            <person name="Dedman K."/>
            <person name="Gentles S."/>
            <person name="Hamlin N."/>
            <person name="Hunt S."/>
            <person name="Jones L."/>
            <person name="McDonald S."/>
            <person name="Murphy L.D."/>
            <person name="Niblett D."/>
            <person name="Odell C."/>
            <person name="Oliver K."/>
            <person name="Rajandream M.A."/>
            <person name="Richards C."/>
            <person name="Shore L."/>
            <person name="Walsh S.V."/>
            <person name="Barrell B.G."/>
            <person name="Dietrich F.S."/>
            <person name="Mulligan J.T."/>
            <person name="Allen E."/>
            <person name="Araujo R."/>
            <person name="Aviles E."/>
            <person name="Berno A."/>
            <person name="Carpenter J."/>
            <person name="Chen E."/>
            <person name="Cherry J.M."/>
            <person name="Chung E."/>
            <person name="Duncan M."/>
            <person name="Hunicke-Smith S."/>
            <person name="Hyman R.W."/>
            <person name="Komp C."/>
            <person name="Lashkari D."/>
            <person name="Lew H."/>
            <person name="Lin D."/>
            <person name="Mosedale D."/>
            <person name="Nakahara K."/>
            <person name="Namath A."/>
            <person name="Oefner P."/>
            <person name="Oh C."/>
            <person name="Petel F.X."/>
            <person name="Roberts D."/>
            <person name="Schramm S."/>
            <person name="Schroeder M."/>
            <person name="Shogren T."/>
            <person name="Shroff N."/>
            <person name="Winant A."/>
            <person name="Yelton M.A."/>
            <person name="Botstein D."/>
            <person name="Davis R.W."/>
            <person name="Johnston M."/>
            <person name="Andrews S."/>
            <person name="Brinkman R."/>
            <person name="Cooper J."/>
            <person name="Ding H."/>
            <person name="Du Z."/>
            <person name="Favello A."/>
            <person name="Fulton L."/>
            <person name="Gattung S."/>
            <person name="Greco T."/>
            <person name="Hallsworth K."/>
            <person name="Hawkins J."/>
            <person name="Hillier L.W."/>
            <person name="Jier M."/>
            <person name="Johnson D."/>
            <person name="Johnston L."/>
            <person name="Kirsten J."/>
            <person name="Kucaba T."/>
            <person name="Langston Y."/>
            <person name="Latreille P."/>
            <person name="Le T."/>
            <person name="Mardis E."/>
            <person name="Menezes S."/>
            <person name="Miller N."/>
            <person name="Nhan M."/>
            <person name="Pauley A."/>
            <person name="Peluso D."/>
            <person name="Rifkin L."/>
            <person name="Riles L."/>
            <person name="Taich A."/>
            <person name="Trevaskis E."/>
            <person name="Vignati D."/>
            <person name="Wilcox L."/>
            <person name="Wohldman P."/>
            <person name="Vaudin M."/>
            <person name="Wilson R."/>
            <person name="Waterston R."/>
            <person name="Albermann K."/>
            <person name="Hani J."/>
            <person name="Heumann K."/>
            <person name="Kleine K."/>
            <person name="Mewes H.-W."/>
            <person name="Zollner A."/>
            <person name="Zaccaria P."/>
        </authorList>
    </citation>
    <scope>NUCLEOTIDE SEQUENCE [LARGE SCALE GENOMIC DNA]</scope>
    <source>
        <strain>ATCC 204508 / S288c</strain>
    </source>
</reference>
<reference key="2">
    <citation type="journal article" date="2014" name="G3 (Bethesda)">
        <title>The reference genome sequence of Saccharomyces cerevisiae: Then and now.</title>
        <authorList>
            <person name="Engel S.R."/>
            <person name="Dietrich F.S."/>
            <person name="Fisk D.G."/>
            <person name="Binkley G."/>
            <person name="Balakrishnan R."/>
            <person name="Costanzo M.C."/>
            <person name="Dwight S.S."/>
            <person name="Hitz B.C."/>
            <person name="Karra K."/>
            <person name="Nash R.S."/>
            <person name="Weng S."/>
            <person name="Wong E.D."/>
            <person name="Lloyd P."/>
            <person name="Skrzypek M.S."/>
            <person name="Miyasato S.R."/>
            <person name="Simison M."/>
            <person name="Cherry J.M."/>
        </authorList>
    </citation>
    <scope>GENOME REANNOTATION</scope>
    <source>
        <strain>ATCC 204508 / S288c</strain>
    </source>
</reference>
<reference key="3">
    <citation type="journal article" date="2007" name="Genome Res.">
        <title>Approaching a complete repository of sequence-verified protein-encoding clones for Saccharomyces cerevisiae.</title>
        <authorList>
            <person name="Hu Y."/>
            <person name="Rolfs A."/>
            <person name="Bhullar B."/>
            <person name="Murthy T.V.S."/>
            <person name="Zhu C."/>
            <person name="Berger M.F."/>
            <person name="Camargo A.A."/>
            <person name="Kelley F."/>
            <person name="McCarron S."/>
            <person name="Jepson D."/>
            <person name="Richardson A."/>
            <person name="Raphael J."/>
            <person name="Moreira D."/>
            <person name="Taycher E."/>
            <person name="Zuo D."/>
            <person name="Mohr S."/>
            <person name="Kane M.F."/>
            <person name="Williamson J."/>
            <person name="Simpson A.J.G."/>
            <person name="Bulyk M.L."/>
            <person name="Harlow E."/>
            <person name="Marsischky G."/>
            <person name="Kolodner R.D."/>
            <person name="LaBaer J."/>
        </authorList>
    </citation>
    <scope>NUCLEOTIDE SEQUENCE [GENOMIC DNA]</scope>
    <source>
        <strain>ATCC 204508 / S288c</strain>
    </source>
</reference>
<reference key="4">
    <citation type="journal article" date="2002" name="Cell">
        <title>Phospho-regulation of kinetochore-microtubule attachments by the Aurora kinase Ipl1p.</title>
        <authorList>
            <person name="Cheeseman I.M."/>
            <person name="Anderson S."/>
            <person name="Jwa M."/>
            <person name="Green E.M."/>
            <person name="Kang J.-S."/>
            <person name="Yates J.R. III"/>
            <person name="Chan C.S.M."/>
            <person name="Drubin D.G."/>
            <person name="Barnes G."/>
        </authorList>
    </citation>
    <scope>FUNCTION</scope>
</reference>
<reference key="5">
    <citation type="journal article" date="2002" name="EMBO J.">
        <title>Four new subunits of the Dam1-Duo1 complex reveal novel functions in sister kinetochore biorientation.</title>
        <authorList>
            <person name="Janke C."/>
            <person name="Ortiz J."/>
            <person name="Tanaka T.U."/>
            <person name="Lechner J."/>
            <person name="Schiebel E."/>
        </authorList>
    </citation>
    <scope>FUNCTION</scope>
    <scope>IDENTIFICATION IN THE DASH COMPLEX</scope>
    <scope>IDENTIFICATION BY MASS SPECTROMETRY</scope>
    <scope>SUBCELLULAR LOCATION</scope>
</reference>
<reference key="6">
    <citation type="journal article" date="2002" name="Genes Dev.">
        <title>The mitotic spindle is required for loading of the DASH complex onto the kinetochore.</title>
        <authorList>
            <person name="Li Y."/>
            <person name="Bachant J.B."/>
            <person name="Alcasabas A.A."/>
            <person name="Wang Y."/>
            <person name="Qin J."/>
            <person name="Elledge S.J."/>
        </authorList>
    </citation>
    <scope>IDENTIFICATION IN THE DASH COMPLEX</scope>
</reference>
<reference key="7">
    <citation type="journal article" date="2003" name="Nature">
        <title>Global analysis of protein localization in budding yeast.</title>
        <authorList>
            <person name="Huh W.-K."/>
            <person name="Falvo J.V."/>
            <person name="Gerke L.C."/>
            <person name="Carroll A.S."/>
            <person name="Howson R.W."/>
            <person name="Weissman J.S."/>
            <person name="O'Shea E.K."/>
        </authorList>
    </citation>
    <scope>SUBCELLULAR LOCATION [LARGE SCALE ANALYSIS]</scope>
</reference>
<reference key="8">
    <citation type="journal article" date="2003" name="Nature">
        <title>Global analysis of protein expression in yeast.</title>
        <authorList>
            <person name="Ghaemmaghami S."/>
            <person name="Huh W.-K."/>
            <person name="Bower K."/>
            <person name="Howson R.W."/>
            <person name="Belle A."/>
            <person name="Dephoure N."/>
            <person name="O'Shea E.K."/>
            <person name="Weissman J.S."/>
        </authorList>
    </citation>
    <scope>LEVEL OF PROTEIN EXPRESSION [LARGE SCALE ANALYSIS]</scope>
</reference>
<reference key="9">
    <citation type="journal article" date="2005" name="Mol. Cell">
        <title>Formation of a dynamic kinetochore-microtubule interface through assembly of the Dam1 ring complex.</title>
        <authorList>
            <person name="Westermann S."/>
            <person name="Avila-Sakar A."/>
            <person name="Wang H.-W."/>
            <person name="Niederstrasser H."/>
            <person name="Wong J."/>
            <person name="Drubin D.G."/>
            <person name="Nogales E."/>
            <person name="Barnes G."/>
        </authorList>
    </citation>
    <scope>FUNCTION</scope>
</reference>
<reference key="10">
    <citation type="journal article" date="2006" name="Nature">
        <title>The Dam1 kinetochore ring complex moves processively on depolymerizing microtubule ends.</title>
        <authorList>
            <person name="Westermann S."/>
            <person name="Wang H.-W."/>
            <person name="Avila-Sakar A."/>
            <person name="Drubin D.G."/>
            <person name="Nogales E."/>
            <person name="Barnes G."/>
        </authorList>
    </citation>
    <scope>FUNCTION</scope>
</reference>
<reference key="11">
    <citation type="journal article" date="2006" name="Nat. Cell Biol.">
        <title>Molecular architecture of a kinetochore-microtubule attachment site.</title>
        <authorList>
            <person name="Joglekar A.P."/>
            <person name="Bouck D.C."/>
            <person name="Molk J.N."/>
            <person name="Bloom K.S."/>
            <person name="Salmon E.D."/>
        </authorList>
    </citation>
    <scope>IDENTIFICATION IN THE DASH COMPLEX</scope>
</reference>
<reference key="12">
    <citation type="journal article" date="2006" name="Proc. Natl. Acad. Sci. U.S.A.">
        <title>The Dam1 kinetochore complex harnesses microtubule dynamics to produce force and movement.</title>
        <authorList>
            <person name="Asbury C.L."/>
            <person name="Gestaut D.R."/>
            <person name="Powers A.F."/>
            <person name="Franck A.D."/>
            <person name="Davis T.N."/>
        </authorList>
    </citation>
    <scope>FUNCTION</scope>
</reference>
<reference key="13">
    <citation type="journal article" date="2007" name="Genes Dev.">
        <title>Kinetochore microtubule interaction during S phase in Saccharomyces cerevisiae.</title>
        <authorList>
            <person name="Kitamura E."/>
            <person name="Tanaka K."/>
            <person name="Kitamura Y."/>
            <person name="Tanaka T.U."/>
        </authorList>
    </citation>
    <scope>FUNCTION</scope>
</reference>
<reference key="14">
    <citation type="journal article" date="2007" name="Mol. Biol. Cell">
        <title>Protein arms in the kinetochore-microtubule interface of the yeast DASH complex.</title>
        <authorList>
            <person name="Miranda J.J."/>
            <person name="King D.S."/>
            <person name="Harrison S.C."/>
        </authorList>
    </citation>
    <scope>FUNCTION</scope>
    <scope>IDENTIFICATION IN THE DASH COMPLEX</scope>
</reference>
<reference key="15">
    <citation type="journal article" date="2008" name="Mol. Cell. Proteomics">
        <title>A multidimensional chromatography technology for in-depth phosphoproteome analysis.</title>
        <authorList>
            <person name="Albuquerque C.P."/>
            <person name="Smolka M.B."/>
            <person name="Payne S.H."/>
            <person name="Bafna V."/>
            <person name="Eng J."/>
            <person name="Zhou H."/>
        </authorList>
    </citation>
    <scope>PHOSPHORYLATION [LARGE SCALE ANALYSIS] AT SER-91</scope>
    <scope>IDENTIFICATION BY MASS SPECTROMETRY [LARGE SCALE ANALYSIS]</scope>
</reference>
<reference key="16">
    <citation type="journal article" date="2009" name="Science">
        <title>Global analysis of Cdk1 substrate phosphorylation sites provides insights into evolution.</title>
        <authorList>
            <person name="Holt L.J."/>
            <person name="Tuch B.B."/>
            <person name="Villen J."/>
            <person name="Johnson A.D."/>
            <person name="Gygi S.P."/>
            <person name="Morgan D.O."/>
        </authorList>
    </citation>
    <scope>IDENTIFICATION BY MASS SPECTROMETRY [LARGE SCALE ANALYSIS]</scope>
</reference>
<reference key="17">
    <citation type="journal article" date="2014" name="Curr. Biol.">
        <title>Assembling the protein architecture of the budding yeast kinetochore-microtubule attachment using FRET.</title>
        <authorList>
            <person name="Aravamudhan P."/>
            <person name="Felzer-Kim I."/>
            <person name="Gurunathan K."/>
            <person name="Joglekar A.P."/>
        </authorList>
    </citation>
    <scope>IDENTIFICATION IN THE DASH COMPLEX</scope>
</reference>
<reference key="18">
    <citation type="journal article" date="2014" name="Nat. Commun.">
        <title>Kinetochores require oligomerization of Dam1 complex to maintain microtubule attachments against tension and promote biorientation.</title>
        <authorList>
            <person name="Umbreit N.T."/>
            <person name="Miller M.P."/>
            <person name="Tien J.F."/>
            <person name="Ortola J.C."/>
            <person name="Gui L."/>
            <person name="Lee K.K."/>
            <person name="Biggins S."/>
            <person name="Asbury C.L."/>
            <person name="Davis T.N."/>
        </authorList>
    </citation>
    <scope>FUNCTION</scope>
    <scope>IDENTIFICATION IN THE DASH COMPLEX</scope>
    <scope>SUBCELLULAR LOCATION</scope>
</reference>
<reference key="19">
    <citation type="journal article" date="2023" name="Cell Rep.">
        <title>Single-copy locus proteomics of early- and late-firing DNA replication origins identifies a role of Ask1/DASH complex in replication timing control.</title>
        <authorList>
            <person name="Weibeta M."/>
            <person name="Chanou A."/>
            <person name="Schauer T."/>
            <person name="Tvardovskiy A."/>
            <person name="Meiser S."/>
            <person name="Koenig A.C."/>
            <person name="Schmidt T."/>
            <person name="Kruse E."/>
            <person name="Ummethum H."/>
            <person name="Trauner M."/>
            <person name="Werner M."/>
            <person name="Lalonde M."/>
            <person name="Hauck S.M."/>
            <person name="Scialdone A."/>
            <person name="Hamperl S."/>
        </authorList>
    </citation>
    <scope>FUNCTION</scope>
</reference>
<reference key="20">
    <citation type="journal article" date="2023" name="EMBO J.">
        <title>DASH/Dam1 complex mutants stabilize ploidy in histone-humanized yeast by weakening kinetochore-microtubule attachments.</title>
        <authorList>
            <person name="Haase M.A.B."/>
            <person name="Olafsson G."/>
            <person name="Flores R.L."/>
            <person name="Boakye-Ansah E."/>
            <person name="Zelter A."/>
            <person name="Dickinson M.S."/>
            <person name="Lazar-Stefanita L."/>
            <person name="Truong D.M."/>
            <person name="Asbury C.L."/>
            <person name="Davis T.N."/>
            <person name="Boeke J.D."/>
        </authorList>
    </citation>
    <scope>MUTAGENESIS OF GLU-50</scope>
</reference>
<reference key="21">
    <citation type="journal article" date="2005" name="Nat. Struct. Mol. Biol.">
        <title>The yeast DASH complex forms closed rings on microtubules.</title>
        <authorList>
            <person name="Miranda J.L."/>
            <person name="Wulf P.D."/>
            <person name="Sorger P.K."/>
            <person name="Harrison S.C."/>
        </authorList>
    </citation>
    <scope>ELECTRON MICROSCOPY OF DASH COMPLEX ALONE AND BOUND TO MICROTUBULES</scope>
    <scope>FUNCTION</scope>
    <scope>IDENTIFICATION IN THE DASH COMPLEX</scope>
</reference>
<reference key="22">
    <citation type="journal article" date="2007" name="Nat. Struct. Mol. Biol.">
        <title>Architecture of the Dam1 kinetochore ring complex and implications for microtubule-driven assembly and force-coupling mechanisms.</title>
        <authorList>
            <person name="Wang H.W."/>
            <person name="Ramey V.H."/>
            <person name="Westermann S."/>
            <person name="Leschziner A.E."/>
            <person name="Welburn J.P."/>
            <person name="Nakajima Y."/>
            <person name="Drubin D.G."/>
            <person name="Barnes G."/>
            <person name="Nogales E."/>
        </authorList>
    </citation>
    <scope>ELECTRON MICROSCOPY OF DASH COMPLEX</scope>
    <scope>FUNCTION</scope>
    <scope>IDENTIFICATION IN THE DASH COMPLEX</scope>
    <scope>SUBUNIT</scope>
</reference>
<name>DAD1_YEAST</name>
<keyword id="KW-0002">3D-structure</keyword>
<keyword id="KW-0131">Cell cycle</keyword>
<keyword id="KW-0132">Cell division</keyword>
<keyword id="KW-0137">Centromere</keyword>
<keyword id="KW-0158">Chromosome</keyword>
<keyword id="KW-0159">Chromosome partition</keyword>
<keyword id="KW-0963">Cytoplasm</keyword>
<keyword id="KW-0206">Cytoskeleton</keyword>
<keyword id="KW-0995">Kinetochore</keyword>
<keyword id="KW-0493">Microtubule</keyword>
<keyword id="KW-0498">Mitosis</keyword>
<keyword id="KW-0539">Nucleus</keyword>
<keyword id="KW-0597">Phosphoprotein</keyword>
<keyword id="KW-1185">Reference proteome</keyword>
<feature type="chain" id="PRO_0000127613" description="DASH complex subunit DAD1">
    <location>
        <begin position="1"/>
        <end position="94"/>
    </location>
</feature>
<feature type="modified residue" description="Phosphoserine" evidence="20">
    <location>
        <position position="91"/>
    </location>
</feature>
<feature type="mutagenesis site" description="Perturbs DASH complex formation and weakens microtubule attachments. Decreases sporulation efficiency and spore viability." evidence="17">
    <original>E</original>
    <variation>D</variation>
    <location>
        <position position="50"/>
    </location>
</feature>
<dbReference type="EMBL" id="Z74312">
    <property type="protein sequence ID" value="CAA98836.1"/>
    <property type="molecule type" value="Genomic_DNA"/>
</dbReference>
<dbReference type="EMBL" id="Z49770">
    <property type="protein sequence ID" value="CAA89841.1"/>
    <property type="molecule type" value="Genomic_DNA"/>
</dbReference>
<dbReference type="EMBL" id="AY557635">
    <property type="protein sequence ID" value="AAS55961.1"/>
    <property type="molecule type" value="Genomic_DNA"/>
</dbReference>
<dbReference type="EMBL" id="BK006938">
    <property type="protein sequence ID" value="DAA11862.1"/>
    <property type="molecule type" value="Genomic_DNA"/>
</dbReference>
<dbReference type="PIR" id="S54639">
    <property type="entry name" value="S54639"/>
</dbReference>
<dbReference type="RefSeq" id="NP_010299.3">
    <property type="nucleotide sequence ID" value="NM_001180324.3"/>
</dbReference>
<dbReference type="PDB" id="8Q84">
    <property type="method" value="EM"/>
    <property type="resolution" value="3.15 A"/>
    <property type="chains" value="L/X=1-94"/>
</dbReference>
<dbReference type="PDB" id="8Q85">
    <property type="method" value="EM"/>
    <property type="resolution" value="3.97 A"/>
    <property type="chains" value="X=1-94"/>
</dbReference>
<dbReference type="PDBsum" id="8Q84"/>
<dbReference type="PDBsum" id="8Q85"/>
<dbReference type="EMDB" id="EMD-18246"/>
<dbReference type="EMDB" id="EMD-18247"/>
<dbReference type="SMR" id="Q12248"/>
<dbReference type="BioGRID" id="32066">
    <property type="interactions" value="363"/>
</dbReference>
<dbReference type="ComplexPortal" id="CPX-1041">
    <property type="entry name" value="DASH complex"/>
</dbReference>
<dbReference type="DIP" id="DIP-1296N"/>
<dbReference type="FunCoup" id="Q12248">
    <property type="interactions" value="51"/>
</dbReference>
<dbReference type="IntAct" id="Q12248">
    <property type="interactions" value="11"/>
</dbReference>
<dbReference type="MINT" id="Q12248"/>
<dbReference type="STRING" id="4932.YDR016C"/>
<dbReference type="iPTMnet" id="Q12248"/>
<dbReference type="PaxDb" id="4932-YDR016C"/>
<dbReference type="PeptideAtlas" id="Q12248"/>
<dbReference type="EnsemblFungi" id="YDR016C_mRNA">
    <property type="protein sequence ID" value="YDR016C"/>
    <property type="gene ID" value="YDR016C"/>
</dbReference>
<dbReference type="GeneID" id="851579"/>
<dbReference type="KEGG" id="sce:YDR016C"/>
<dbReference type="AGR" id="SGD:S000002423"/>
<dbReference type="SGD" id="S000002423">
    <property type="gene designation" value="DAD1"/>
</dbReference>
<dbReference type="VEuPathDB" id="FungiDB:YDR016C"/>
<dbReference type="eggNOG" id="ENOG502SBWQ">
    <property type="taxonomic scope" value="Eukaryota"/>
</dbReference>
<dbReference type="HOGENOM" id="CLU_142427_2_2_1"/>
<dbReference type="InParanoid" id="Q12248"/>
<dbReference type="OMA" id="ENVSELW"/>
<dbReference type="OrthoDB" id="5566853at2759"/>
<dbReference type="BioCyc" id="YEAST:G3O-29634-MONOMER"/>
<dbReference type="BioGRID-ORCS" id="851579">
    <property type="hits" value="6 hits in 10 CRISPR screens"/>
</dbReference>
<dbReference type="CD-CODE" id="876000F7">
    <property type="entry name" value="Centrosome"/>
</dbReference>
<dbReference type="PRO" id="PR:Q12248"/>
<dbReference type="Proteomes" id="UP000002311">
    <property type="component" value="Chromosome IV"/>
</dbReference>
<dbReference type="RNAct" id="Q12248">
    <property type="molecule type" value="protein"/>
</dbReference>
<dbReference type="GO" id="GO:0005737">
    <property type="term" value="C:cytoplasm"/>
    <property type="evidence" value="ECO:0007669"/>
    <property type="project" value="UniProtKB-KW"/>
</dbReference>
<dbReference type="GO" id="GO:0042729">
    <property type="term" value="C:DASH complex"/>
    <property type="evidence" value="ECO:0000314"/>
    <property type="project" value="SGD"/>
</dbReference>
<dbReference type="GO" id="GO:0072686">
    <property type="term" value="C:mitotic spindle"/>
    <property type="evidence" value="ECO:0000303"/>
    <property type="project" value="ComplexPortal"/>
</dbReference>
<dbReference type="GO" id="GO:0044732">
    <property type="term" value="C:mitotic spindle pole body"/>
    <property type="evidence" value="ECO:0000318"/>
    <property type="project" value="GO_Central"/>
</dbReference>
<dbReference type="GO" id="GO:0005876">
    <property type="term" value="C:spindle microtubule"/>
    <property type="evidence" value="ECO:0000318"/>
    <property type="project" value="GO_Central"/>
</dbReference>
<dbReference type="GO" id="GO:0008608">
    <property type="term" value="P:attachment of spindle microtubules to kinetochore"/>
    <property type="evidence" value="ECO:0000314"/>
    <property type="project" value="SGD"/>
</dbReference>
<dbReference type="GO" id="GO:0051301">
    <property type="term" value="P:cell division"/>
    <property type="evidence" value="ECO:0007669"/>
    <property type="project" value="UniProtKB-KW"/>
</dbReference>
<dbReference type="GO" id="GO:1990758">
    <property type="term" value="P:mitotic sister chromatid biorientation"/>
    <property type="evidence" value="ECO:0000314"/>
    <property type="project" value="ComplexPortal"/>
</dbReference>
<dbReference type="GO" id="GO:0051987">
    <property type="term" value="P:positive regulation of attachment of spindle microtubules to kinetochore"/>
    <property type="evidence" value="ECO:0000314"/>
    <property type="project" value="ComplexPortal"/>
</dbReference>
<dbReference type="GO" id="GO:0031116">
    <property type="term" value="P:positive regulation of microtubule polymerization"/>
    <property type="evidence" value="ECO:0000314"/>
    <property type="project" value="SGD"/>
</dbReference>
<dbReference type="GO" id="GO:1990976">
    <property type="term" value="P:protein transport along microtubule to mitotic spindle pole body"/>
    <property type="evidence" value="ECO:0000315"/>
    <property type="project" value="UniProtKB"/>
</dbReference>
<dbReference type="InterPro" id="IPR013958">
    <property type="entry name" value="DASH_Dad1"/>
</dbReference>
<dbReference type="PANTHER" id="PTHR28025">
    <property type="entry name" value="DASH COMPLEX SUBUNIT DAD1"/>
    <property type="match status" value="1"/>
</dbReference>
<dbReference type="PANTHER" id="PTHR28025:SF1">
    <property type="entry name" value="DASH COMPLEX SUBUNIT DAD1"/>
    <property type="match status" value="1"/>
</dbReference>
<dbReference type="Pfam" id="PF08649">
    <property type="entry name" value="DASH_Dad1"/>
    <property type="match status" value="1"/>
</dbReference>
<gene>
    <name type="primary">DAD1</name>
    <name type="ordered locus">YDR016C</name>
</gene>
<evidence type="ECO:0000250" key="1">
    <source>
        <dbReference type="UniProtKB" id="P87297"/>
    </source>
</evidence>
<evidence type="ECO:0000269" key="2">
    <source>
    </source>
</evidence>
<evidence type="ECO:0000269" key="3">
    <source>
    </source>
</evidence>
<evidence type="ECO:0000269" key="4">
    <source>
    </source>
</evidence>
<evidence type="ECO:0000269" key="5">
    <source>
    </source>
</evidence>
<evidence type="ECO:0000269" key="6">
    <source>
    </source>
</evidence>
<evidence type="ECO:0000269" key="7">
    <source>
    </source>
</evidence>
<evidence type="ECO:0000269" key="8">
    <source>
    </source>
</evidence>
<evidence type="ECO:0000269" key="9">
    <source>
    </source>
</evidence>
<evidence type="ECO:0000269" key="10">
    <source>
    </source>
</evidence>
<evidence type="ECO:0000269" key="11">
    <source>
    </source>
</evidence>
<evidence type="ECO:0000269" key="12">
    <source>
    </source>
</evidence>
<evidence type="ECO:0000269" key="13">
    <source>
    </source>
</evidence>
<evidence type="ECO:0000269" key="14">
    <source>
    </source>
</evidence>
<evidence type="ECO:0000269" key="15">
    <source>
    </source>
</evidence>
<evidence type="ECO:0000269" key="16">
    <source>
    </source>
</evidence>
<evidence type="ECO:0000269" key="17">
    <source>
    </source>
</evidence>
<evidence type="ECO:0000269" key="18">
    <source>
    </source>
</evidence>
<evidence type="ECO:0000305" key="19"/>
<evidence type="ECO:0007744" key="20">
    <source>
    </source>
</evidence>
<accession>Q12248</accession>
<accession>D6VS02</accession>
<comment type="function">
    <text evidence="2 4 7 8 9 11 12 13 14 16 18">Component of the DASH complex that connects microtubules with kinetochores and couples microtubule depolymerisation to chromosome movement; it is involved in retrieving kinetochores to the spindle poles before their re-orientation on the spindle in early mitosis and allows microtubule depolymerization to pull chromosomes apart and resist detachment during anaphase (PubMed:15664196, PubMed:16415853, PubMed:16777964, PubMed:17460120, PubMed:17643123). Kinetochores, consisting of a centromere-associated inner segment and a microtubule-contacting outer segment, play a crucial role in chromosome segregation by mediating the physical connection between centromeric DNA and microtubules (PubMed:11782438). Kinetochores also serve as an input point for the spindle assembly checkpoint, which delays anaphase until all chromosomes have bioriented on the mitotic spindle (PubMed:11782438). During spindle-kinetochore attachment, kinetochores first attach to the lateral surface of spindle microtubules, which supports the congression of chromosomes toward the middle of the dividing cell; they then slide along towards the spindle pole, a process independent of the DASH complex but requiring the NDC80 complex (PubMed:25236177). When the end of a disassembling microtubule reaches the laterally attached kinetochore, the DASH complex together with the NDC80 complex and STU2 convert lateral attachment to end-on capture to produce a structure that can track with microtubule shortening and sustain attachment when tension is applied across sister kinetochores upon their biorientation (PubMed:15640796, PubMed:15664196, PubMed:25236177). Microtubule depolymerization proceeds by protofilament splaying and induces the kinetochore-attached DASH complex to slide longitudinally, thereby helping to transduce depolymerization energy into pulling forces to disjoin chromatids (PubMed:16415853, PubMed:16777964). Incorrect microtubule attachments are corrected by releasing microubules from the kinetochore through phosphorylation by IPL1 of kinetochore components (PubMed:12408861). Links the microtubule cytoskeleton to chromosomes during interphase (PubMed:36701236). Also contributes to the poleward transport of kinetochores on microtubules following centromeric DNA replication in S-phase (PubMed:18079178).</text>
</comment>
<comment type="subunit">
    <text evidence="1 2 3 7 10 12 13 15 16">Component of the DASH complex consisting of ASK1, DAD1, DAD2, DAD3, DAD4, DAM1, DUO1, HSK3, SPC19 and SPC34, with a stoichiometry of one copy of each subunit per complex (PubMed:11782438, PubMed:11799062, PubMed:15640796, PubMed:16715078, PubMed:17460120, PubMed:17643123, PubMed:24930965, PubMed:25236177). Multiple DASH complexes oligomerize to form a ring that encircles spindle microtubules and organizes the rod-like NDC80 complexes of the outer kinetochore (PubMed:16715078, PubMed:17460120, PubMed:17643123, PubMed:25236177). DASH complex oligomerization strengthens microtubule attachments (PubMed:25236177). On cytoplasmic microtubules, DASH complexes appear to form patches instead of rings (By similarity).</text>
</comment>
<comment type="interaction">
    <interactant intactId="EBI-35662">
        <id>Q12248</id>
    </interactant>
    <interactant intactId="EBI-975389">
        <id>P69851</id>
        <label>DAD4</label>
    </interactant>
    <organismsDiffer>false</organismsDiffer>
    <experiments>3</experiments>
</comment>
<comment type="interaction">
    <interactant intactId="EBI-35662">
        <id>Q12248</id>
    </interactant>
    <interactant intactId="EBI-23268">
        <id>P53267</id>
        <label>DAM1</label>
    </interactant>
    <organismsDiffer>false</organismsDiffer>
    <experiments>5</experiments>
</comment>
<comment type="interaction">
    <interactant intactId="EBI-35662">
        <id>Q12248</id>
    </interactant>
    <interactant intactId="EBI-23800">
        <id>P53168</id>
        <label>DUO1</label>
    </interactant>
    <organismsDiffer>false</organismsDiffer>
    <experiments>4</experiments>
</comment>
<comment type="subcellular location">
    <subcellularLocation>
        <location evidence="5 16">Nucleus</location>
    </subcellularLocation>
    <subcellularLocation>
        <location evidence="2 5 16">Cytoplasm</location>
        <location evidence="2 5 16">Cytoskeleton</location>
        <location evidence="2 5 16">Spindle</location>
    </subcellularLocation>
    <subcellularLocation>
        <location evidence="2 5 16">Chromosome</location>
        <location evidence="2 5 16">Centromere</location>
        <location evidence="2 5 16">Kinetochore</location>
    </subcellularLocation>
    <text evidence="5 16">Associates with the mitotic spindle and the kinetochore.</text>
</comment>
<comment type="miscellaneous">
    <text evidence="6">Present with 799 molecules/cell in log phase SD medium.</text>
</comment>
<comment type="similarity">
    <text evidence="19">Belongs to the DASH complex DAD1 family.</text>
</comment>
<sequence>MMASTSNDEEKLISTTDKYFIEQRNIVLQEINETMNSILNGLNGLNISLESSIAVGREFQSVSDLWKTLYDGLESLSDEAPIDEQPTLSQSKTK</sequence>